<sequence length="154" mass="17238">MKLRDSLAENKSIRLQAEAETWQEAVKIGVDLLVAADVVEPRYYQAILDGVEQFGPYFVIAPGLAMPHGRPEEGVKKTGFSLVTLKKPLEFNHDDNDPVDILITMAAVDANTHQEVGIMQIVNLFEDEENFDRLRACRTEQEVLDLIDRTNAAA</sequence>
<protein>
    <recommendedName>
        <fullName evidence="1">Ascorbate-specific PTS system EIIA component</fullName>
    </recommendedName>
    <alternativeName>
        <fullName evidence="1">Ascorbate-specific phosphotransferase enzyme IIA component</fullName>
    </alternativeName>
</protein>
<dbReference type="EMBL" id="AE005174">
    <property type="protein sequence ID" value="AAG59391.1"/>
    <property type="molecule type" value="Genomic_DNA"/>
</dbReference>
<dbReference type="EMBL" id="BA000007">
    <property type="protein sequence ID" value="BAB38594.1"/>
    <property type="molecule type" value="Genomic_DNA"/>
</dbReference>
<dbReference type="PIR" id="C86116">
    <property type="entry name" value="C86116"/>
</dbReference>
<dbReference type="PIR" id="C91275">
    <property type="entry name" value="C91275"/>
</dbReference>
<dbReference type="RefSeq" id="NP_313198.1">
    <property type="nucleotide sequence ID" value="NC_002695.1"/>
</dbReference>
<dbReference type="RefSeq" id="WP_000776517.1">
    <property type="nucleotide sequence ID" value="NZ_VOAI01000008.1"/>
</dbReference>
<dbReference type="SMR" id="P69821"/>
<dbReference type="STRING" id="155864.Z5804"/>
<dbReference type="GeneID" id="914001"/>
<dbReference type="KEGG" id="ece:Z5804"/>
<dbReference type="KEGG" id="ecs:ECs_5171"/>
<dbReference type="PATRIC" id="fig|386585.9.peg.5405"/>
<dbReference type="eggNOG" id="COG1762">
    <property type="taxonomic scope" value="Bacteria"/>
</dbReference>
<dbReference type="HOGENOM" id="CLU_072531_2_0_6"/>
<dbReference type="OMA" id="MGPYIIL"/>
<dbReference type="Proteomes" id="UP000000558">
    <property type="component" value="Chromosome"/>
</dbReference>
<dbReference type="Proteomes" id="UP000002519">
    <property type="component" value="Chromosome"/>
</dbReference>
<dbReference type="GO" id="GO:0005737">
    <property type="term" value="C:cytoplasm"/>
    <property type="evidence" value="ECO:0007669"/>
    <property type="project" value="UniProtKB-SubCell"/>
</dbReference>
<dbReference type="GO" id="GO:0016301">
    <property type="term" value="F:kinase activity"/>
    <property type="evidence" value="ECO:0007669"/>
    <property type="project" value="UniProtKB-KW"/>
</dbReference>
<dbReference type="GO" id="GO:0009401">
    <property type="term" value="P:phosphoenolpyruvate-dependent sugar phosphotransferase system"/>
    <property type="evidence" value="ECO:0007669"/>
    <property type="project" value="UniProtKB-KW"/>
</dbReference>
<dbReference type="CDD" id="cd00211">
    <property type="entry name" value="PTS_IIA_fru"/>
    <property type="match status" value="1"/>
</dbReference>
<dbReference type="FunFam" id="3.40.930.10:FF:000005">
    <property type="entry name" value="Ascorbate-specific phosphotransferase enzyme IIA component"/>
    <property type="match status" value="1"/>
</dbReference>
<dbReference type="Gene3D" id="3.40.930.10">
    <property type="entry name" value="Mannitol-specific EII, Chain A"/>
    <property type="match status" value="1"/>
</dbReference>
<dbReference type="InterPro" id="IPR051351">
    <property type="entry name" value="Ascorbate-PTS_EIIA_comp"/>
</dbReference>
<dbReference type="InterPro" id="IPR016152">
    <property type="entry name" value="PTrfase/Anion_transptr"/>
</dbReference>
<dbReference type="InterPro" id="IPR002178">
    <property type="entry name" value="PTS_EIIA_type-2_dom"/>
</dbReference>
<dbReference type="NCBIfam" id="NF007694">
    <property type="entry name" value="PRK10372.1"/>
    <property type="match status" value="1"/>
</dbReference>
<dbReference type="PANTHER" id="PTHR36203">
    <property type="entry name" value="ASCORBATE-SPECIFIC PTS SYSTEM EIIA COMPONENT"/>
    <property type="match status" value="1"/>
</dbReference>
<dbReference type="PANTHER" id="PTHR36203:SF1">
    <property type="entry name" value="ASCORBATE-SPECIFIC PTS SYSTEM EIIA COMPONENT"/>
    <property type="match status" value="1"/>
</dbReference>
<dbReference type="Pfam" id="PF00359">
    <property type="entry name" value="PTS_EIIA_2"/>
    <property type="match status" value="1"/>
</dbReference>
<dbReference type="SUPFAM" id="SSF55804">
    <property type="entry name" value="Phoshotransferase/anion transport protein"/>
    <property type="match status" value="1"/>
</dbReference>
<dbReference type="PROSITE" id="PS51094">
    <property type="entry name" value="PTS_EIIA_TYPE_2"/>
    <property type="match status" value="1"/>
</dbReference>
<dbReference type="PROSITE" id="PS00372">
    <property type="entry name" value="PTS_EIIA_TYPE_2_HIS"/>
    <property type="match status" value="1"/>
</dbReference>
<feature type="chain" id="PRO_0000186684" description="Ascorbate-specific PTS system EIIA component">
    <location>
        <begin position="1"/>
        <end position="154"/>
    </location>
</feature>
<feature type="domain" description="PTS EIIA type-2" evidence="2">
    <location>
        <begin position="6"/>
        <end position="150"/>
    </location>
</feature>
<feature type="active site" description="Tele-phosphohistidine intermediate" evidence="2">
    <location>
        <position position="68"/>
    </location>
</feature>
<feature type="modified residue" description="Phosphohistidine" evidence="1">
    <location>
        <position position="68"/>
    </location>
</feature>
<comment type="function">
    <text evidence="1">The phosphoenolpyruvate-dependent sugar phosphotransferase system (sugar PTS), a major carbohydrate active transport system, catalyzes the phosphorylation of incoming sugar substrates concomitantly with their translocation across the cell membrane. The enzyme II UlaABC PTS system is involved in ascorbate transport.</text>
</comment>
<comment type="subcellular location">
    <subcellularLocation>
        <location evidence="3">Cytoplasm</location>
    </subcellularLocation>
</comment>
<comment type="induction">
    <text evidence="1">Induced by L-ascorbate. Repressed by UlaR.</text>
</comment>
<comment type="domain">
    <text evidence="2">The PTS EIIA type-2 domain is phosphorylated by phospho-HPr on a histidyl residue. Then, it transfers the phosphoryl group to the PTS EIIB type-2 domain.</text>
</comment>
<name>ULAC_ECO57</name>
<evidence type="ECO:0000250" key="1">
    <source>
        <dbReference type="UniProtKB" id="P69820"/>
    </source>
</evidence>
<evidence type="ECO:0000255" key="2">
    <source>
        <dbReference type="PROSITE-ProRule" id="PRU00417"/>
    </source>
</evidence>
<evidence type="ECO:0000305" key="3"/>
<gene>
    <name type="primary">ulaC</name>
    <name type="synonym">sgaA</name>
    <name type="ordered locus">Z5804</name>
    <name type="ordered locus">ECs5171</name>
</gene>
<proteinExistence type="inferred from homology"/>
<organism>
    <name type="scientific">Escherichia coli O157:H7</name>
    <dbReference type="NCBI Taxonomy" id="83334"/>
    <lineage>
        <taxon>Bacteria</taxon>
        <taxon>Pseudomonadati</taxon>
        <taxon>Pseudomonadota</taxon>
        <taxon>Gammaproteobacteria</taxon>
        <taxon>Enterobacterales</taxon>
        <taxon>Enterobacteriaceae</taxon>
        <taxon>Escherichia</taxon>
    </lineage>
</organism>
<keyword id="KW-0963">Cytoplasm</keyword>
<keyword id="KW-0418">Kinase</keyword>
<keyword id="KW-0597">Phosphoprotein</keyword>
<keyword id="KW-0598">Phosphotransferase system</keyword>
<keyword id="KW-1185">Reference proteome</keyword>
<keyword id="KW-0808">Transferase</keyword>
<keyword id="KW-0813">Transport</keyword>
<accession>P69821</accession>
<accession>P39303</accession>
<reference key="1">
    <citation type="journal article" date="2001" name="Nature">
        <title>Genome sequence of enterohaemorrhagic Escherichia coli O157:H7.</title>
        <authorList>
            <person name="Perna N.T."/>
            <person name="Plunkett G. III"/>
            <person name="Burland V."/>
            <person name="Mau B."/>
            <person name="Glasner J.D."/>
            <person name="Rose D.J."/>
            <person name="Mayhew G.F."/>
            <person name="Evans P.S."/>
            <person name="Gregor J."/>
            <person name="Kirkpatrick H.A."/>
            <person name="Posfai G."/>
            <person name="Hackett J."/>
            <person name="Klink S."/>
            <person name="Boutin A."/>
            <person name="Shao Y."/>
            <person name="Miller L."/>
            <person name="Grotbeck E.J."/>
            <person name="Davis N.W."/>
            <person name="Lim A."/>
            <person name="Dimalanta E.T."/>
            <person name="Potamousis K."/>
            <person name="Apodaca J."/>
            <person name="Anantharaman T.S."/>
            <person name="Lin J."/>
            <person name="Yen G."/>
            <person name="Schwartz D.C."/>
            <person name="Welch R.A."/>
            <person name="Blattner F.R."/>
        </authorList>
    </citation>
    <scope>NUCLEOTIDE SEQUENCE [LARGE SCALE GENOMIC DNA]</scope>
    <source>
        <strain>O157:H7 / EDL933 / ATCC 700927 / EHEC</strain>
    </source>
</reference>
<reference key="2">
    <citation type="journal article" date="2001" name="DNA Res.">
        <title>Complete genome sequence of enterohemorrhagic Escherichia coli O157:H7 and genomic comparison with a laboratory strain K-12.</title>
        <authorList>
            <person name="Hayashi T."/>
            <person name="Makino K."/>
            <person name="Ohnishi M."/>
            <person name="Kurokawa K."/>
            <person name="Ishii K."/>
            <person name="Yokoyama K."/>
            <person name="Han C.-G."/>
            <person name="Ohtsubo E."/>
            <person name="Nakayama K."/>
            <person name="Murata T."/>
            <person name="Tanaka M."/>
            <person name="Tobe T."/>
            <person name="Iida T."/>
            <person name="Takami H."/>
            <person name="Honda T."/>
            <person name="Sasakawa C."/>
            <person name="Ogasawara N."/>
            <person name="Yasunaga T."/>
            <person name="Kuhara S."/>
            <person name="Shiba T."/>
            <person name="Hattori M."/>
            <person name="Shinagawa H."/>
        </authorList>
    </citation>
    <scope>NUCLEOTIDE SEQUENCE [LARGE SCALE GENOMIC DNA]</scope>
    <source>
        <strain>O157:H7 / Sakai / RIMD 0509952 / EHEC</strain>
    </source>
</reference>